<keyword id="KW-0963">Cytoplasm</keyword>
<keyword id="KW-0251">Elongation factor</keyword>
<keyword id="KW-0342">GTP-binding</keyword>
<keyword id="KW-0378">Hydrolase</keyword>
<keyword id="KW-0460">Magnesium</keyword>
<keyword id="KW-0479">Metal-binding</keyword>
<keyword id="KW-0547">Nucleotide-binding</keyword>
<keyword id="KW-0648">Protein biosynthesis</keyword>
<keyword id="KW-1185">Reference proteome</keyword>
<sequence length="396" mass="42998">MAKAKFERTKPHVNIGTIGHVDHGKTTLTAAITKVLAGKGQAEFKAFDQIDNAPEERERGITIATAHVEYETDKRHYAHVDCPGHADYVKNMITGAAQMDGAILVVSAADGPMPQTREHILLARQVGVPYIVVFLNKADMVDDEELLELVELEIRELLSSYDFPGDDIPIIKGSALKALEGDTGELGEQAIMKLMEAVDSYIPEPVRAIDKPFLMPVEDVFSISGRGTVATGRVERGIVKVGEEVEIVGMKATAKTTVTGVEMFRKLLDEGRAGDNIGALLRGVKREDIERGQVLAKPGSITPHTKFKAEAYILTKEEGGRHTPFFNGYRPQFYFRTTDVTGIVELAAGTEMVMPGDNVAVTVNLITPIAMDEGLRFAIREGGRTVGAGVVSSIIE</sequence>
<feature type="chain" id="PRO_0000337396" description="Elongation factor Tu">
    <location>
        <begin position="1"/>
        <end position="396"/>
    </location>
</feature>
<feature type="domain" description="tr-type G">
    <location>
        <begin position="10"/>
        <end position="206"/>
    </location>
</feature>
<feature type="region of interest" description="G1" evidence="1">
    <location>
        <begin position="19"/>
        <end position="26"/>
    </location>
</feature>
<feature type="region of interest" description="G2" evidence="1">
    <location>
        <begin position="60"/>
        <end position="64"/>
    </location>
</feature>
<feature type="region of interest" description="G3" evidence="1">
    <location>
        <begin position="81"/>
        <end position="84"/>
    </location>
</feature>
<feature type="region of interest" description="G4" evidence="1">
    <location>
        <begin position="136"/>
        <end position="139"/>
    </location>
</feature>
<feature type="region of interest" description="G5" evidence="1">
    <location>
        <begin position="174"/>
        <end position="176"/>
    </location>
</feature>
<feature type="binding site" evidence="2">
    <location>
        <begin position="19"/>
        <end position="26"/>
    </location>
    <ligand>
        <name>GTP</name>
        <dbReference type="ChEBI" id="CHEBI:37565"/>
    </ligand>
</feature>
<feature type="binding site" evidence="2">
    <location>
        <position position="26"/>
    </location>
    <ligand>
        <name>Mg(2+)</name>
        <dbReference type="ChEBI" id="CHEBI:18420"/>
    </ligand>
</feature>
<feature type="binding site" evidence="2">
    <location>
        <begin position="81"/>
        <end position="85"/>
    </location>
    <ligand>
        <name>GTP</name>
        <dbReference type="ChEBI" id="CHEBI:37565"/>
    </ligand>
</feature>
<feature type="binding site" evidence="2">
    <location>
        <begin position="136"/>
        <end position="139"/>
    </location>
    <ligand>
        <name>GTP</name>
        <dbReference type="ChEBI" id="CHEBI:37565"/>
    </ligand>
</feature>
<comment type="function">
    <text evidence="2">GTP hydrolase that promotes the GTP-dependent binding of aminoacyl-tRNA to the A-site of ribosomes during protein biosynthesis.</text>
</comment>
<comment type="catalytic activity">
    <reaction evidence="2">
        <text>GTP + H2O = GDP + phosphate + H(+)</text>
        <dbReference type="Rhea" id="RHEA:19669"/>
        <dbReference type="ChEBI" id="CHEBI:15377"/>
        <dbReference type="ChEBI" id="CHEBI:15378"/>
        <dbReference type="ChEBI" id="CHEBI:37565"/>
        <dbReference type="ChEBI" id="CHEBI:43474"/>
        <dbReference type="ChEBI" id="CHEBI:58189"/>
        <dbReference type="EC" id="3.6.5.3"/>
    </reaction>
    <physiologicalReaction direction="left-to-right" evidence="2">
        <dbReference type="Rhea" id="RHEA:19670"/>
    </physiologicalReaction>
</comment>
<comment type="subunit">
    <text evidence="2">Monomer.</text>
</comment>
<comment type="subcellular location">
    <subcellularLocation>
        <location evidence="2">Cytoplasm</location>
    </subcellularLocation>
</comment>
<comment type="similarity">
    <text evidence="2">Belongs to the TRAFAC class translation factor GTPase superfamily. Classic translation factor GTPase family. EF-Tu/EF-1A subfamily.</text>
</comment>
<evidence type="ECO:0000250" key="1"/>
<evidence type="ECO:0000255" key="2">
    <source>
        <dbReference type="HAMAP-Rule" id="MF_00118"/>
    </source>
</evidence>
<accession>A5GAW4</accession>
<organism>
    <name type="scientific">Geotalea uraniireducens (strain Rf4)</name>
    <name type="common">Geobacter uraniireducens</name>
    <dbReference type="NCBI Taxonomy" id="351605"/>
    <lineage>
        <taxon>Bacteria</taxon>
        <taxon>Pseudomonadati</taxon>
        <taxon>Thermodesulfobacteriota</taxon>
        <taxon>Desulfuromonadia</taxon>
        <taxon>Geobacterales</taxon>
        <taxon>Geobacteraceae</taxon>
        <taxon>Geotalea</taxon>
    </lineage>
</organism>
<reference key="1">
    <citation type="submission" date="2007-05" db="EMBL/GenBank/DDBJ databases">
        <title>Complete sequence of Geobacter uraniireducens Rf4.</title>
        <authorList>
            <consortium name="US DOE Joint Genome Institute"/>
            <person name="Copeland A."/>
            <person name="Lucas S."/>
            <person name="Lapidus A."/>
            <person name="Barry K."/>
            <person name="Detter J.C."/>
            <person name="Glavina del Rio T."/>
            <person name="Hammon N."/>
            <person name="Israni S."/>
            <person name="Dalin E."/>
            <person name="Tice H."/>
            <person name="Pitluck S."/>
            <person name="Chertkov O."/>
            <person name="Brettin T."/>
            <person name="Bruce D."/>
            <person name="Han C."/>
            <person name="Schmutz J."/>
            <person name="Larimer F."/>
            <person name="Land M."/>
            <person name="Hauser L."/>
            <person name="Kyrpides N."/>
            <person name="Mikhailova N."/>
            <person name="Shelobolina E."/>
            <person name="Aklujkar M."/>
            <person name="Lovley D."/>
            <person name="Richardson P."/>
        </authorList>
    </citation>
    <scope>NUCLEOTIDE SEQUENCE [LARGE SCALE GENOMIC DNA]</scope>
    <source>
        <strain>ATCC BAA-1134 / JCM 13001 / Rf4</strain>
    </source>
</reference>
<dbReference type="EC" id="3.6.5.3" evidence="2"/>
<dbReference type="EMBL" id="CP000698">
    <property type="protein sequence ID" value="ABQ25259.1"/>
    <property type="molecule type" value="Genomic_DNA"/>
</dbReference>
<dbReference type="EMBL" id="CP000698">
    <property type="protein sequence ID" value="ABQ25272.1"/>
    <property type="molecule type" value="Genomic_DNA"/>
</dbReference>
<dbReference type="RefSeq" id="WP_011937983.1">
    <property type="nucleotide sequence ID" value="NC_009483.1"/>
</dbReference>
<dbReference type="SMR" id="A5GAW4"/>
<dbReference type="STRING" id="351605.Gura_1053"/>
<dbReference type="KEGG" id="gur:Gura_1053"/>
<dbReference type="KEGG" id="gur:Gura_1066"/>
<dbReference type="HOGENOM" id="CLU_007265_0_0_7"/>
<dbReference type="OrthoDB" id="9803139at2"/>
<dbReference type="Proteomes" id="UP000006695">
    <property type="component" value="Chromosome"/>
</dbReference>
<dbReference type="GO" id="GO:0005829">
    <property type="term" value="C:cytosol"/>
    <property type="evidence" value="ECO:0007669"/>
    <property type="project" value="TreeGrafter"/>
</dbReference>
<dbReference type="GO" id="GO:0005525">
    <property type="term" value="F:GTP binding"/>
    <property type="evidence" value="ECO:0007669"/>
    <property type="project" value="UniProtKB-UniRule"/>
</dbReference>
<dbReference type="GO" id="GO:0003924">
    <property type="term" value="F:GTPase activity"/>
    <property type="evidence" value="ECO:0007669"/>
    <property type="project" value="InterPro"/>
</dbReference>
<dbReference type="GO" id="GO:0003746">
    <property type="term" value="F:translation elongation factor activity"/>
    <property type="evidence" value="ECO:0007669"/>
    <property type="project" value="UniProtKB-UniRule"/>
</dbReference>
<dbReference type="CDD" id="cd01884">
    <property type="entry name" value="EF_Tu"/>
    <property type="match status" value="1"/>
</dbReference>
<dbReference type="CDD" id="cd03697">
    <property type="entry name" value="EFTU_II"/>
    <property type="match status" value="1"/>
</dbReference>
<dbReference type="CDD" id="cd03707">
    <property type="entry name" value="EFTU_III"/>
    <property type="match status" value="1"/>
</dbReference>
<dbReference type="FunFam" id="2.40.30.10:FF:000001">
    <property type="entry name" value="Elongation factor Tu"/>
    <property type="match status" value="1"/>
</dbReference>
<dbReference type="FunFam" id="3.40.50.300:FF:000003">
    <property type="entry name" value="Elongation factor Tu"/>
    <property type="match status" value="1"/>
</dbReference>
<dbReference type="Gene3D" id="3.40.50.300">
    <property type="entry name" value="P-loop containing nucleotide triphosphate hydrolases"/>
    <property type="match status" value="1"/>
</dbReference>
<dbReference type="Gene3D" id="2.40.30.10">
    <property type="entry name" value="Translation factors"/>
    <property type="match status" value="2"/>
</dbReference>
<dbReference type="HAMAP" id="MF_00118_B">
    <property type="entry name" value="EF_Tu_B"/>
    <property type="match status" value="1"/>
</dbReference>
<dbReference type="InterPro" id="IPR041709">
    <property type="entry name" value="EF-Tu_GTP-bd"/>
</dbReference>
<dbReference type="InterPro" id="IPR050055">
    <property type="entry name" value="EF-Tu_GTPase"/>
</dbReference>
<dbReference type="InterPro" id="IPR004161">
    <property type="entry name" value="EFTu-like_2"/>
</dbReference>
<dbReference type="InterPro" id="IPR033720">
    <property type="entry name" value="EFTU_2"/>
</dbReference>
<dbReference type="InterPro" id="IPR031157">
    <property type="entry name" value="G_TR_CS"/>
</dbReference>
<dbReference type="InterPro" id="IPR027417">
    <property type="entry name" value="P-loop_NTPase"/>
</dbReference>
<dbReference type="InterPro" id="IPR005225">
    <property type="entry name" value="Small_GTP-bd"/>
</dbReference>
<dbReference type="InterPro" id="IPR000795">
    <property type="entry name" value="T_Tr_GTP-bd_dom"/>
</dbReference>
<dbReference type="InterPro" id="IPR009000">
    <property type="entry name" value="Transl_B-barrel_sf"/>
</dbReference>
<dbReference type="InterPro" id="IPR009001">
    <property type="entry name" value="Transl_elong_EF1A/Init_IF2_C"/>
</dbReference>
<dbReference type="InterPro" id="IPR004541">
    <property type="entry name" value="Transl_elong_EFTu/EF1A_bac/org"/>
</dbReference>
<dbReference type="InterPro" id="IPR004160">
    <property type="entry name" value="Transl_elong_EFTu/EF1A_C"/>
</dbReference>
<dbReference type="NCBIfam" id="TIGR00485">
    <property type="entry name" value="EF-Tu"/>
    <property type="match status" value="1"/>
</dbReference>
<dbReference type="NCBIfam" id="NF000766">
    <property type="entry name" value="PRK00049.1"/>
    <property type="match status" value="1"/>
</dbReference>
<dbReference type="NCBIfam" id="NF009372">
    <property type="entry name" value="PRK12735.1"/>
    <property type="match status" value="1"/>
</dbReference>
<dbReference type="NCBIfam" id="NF009373">
    <property type="entry name" value="PRK12736.1"/>
    <property type="match status" value="1"/>
</dbReference>
<dbReference type="NCBIfam" id="TIGR00231">
    <property type="entry name" value="small_GTP"/>
    <property type="match status" value="1"/>
</dbReference>
<dbReference type="PANTHER" id="PTHR43721:SF22">
    <property type="entry name" value="ELONGATION FACTOR TU, MITOCHONDRIAL"/>
    <property type="match status" value="1"/>
</dbReference>
<dbReference type="PANTHER" id="PTHR43721">
    <property type="entry name" value="ELONGATION FACTOR TU-RELATED"/>
    <property type="match status" value="1"/>
</dbReference>
<dbReference type="Pfam" id="PF00009">
    <property type="entry name" value="GTP_EFTU"/>
    <property type="match status" value="1"/>
</dbReference>
<dbReference type="Pfam" id="PF03144">
    <property type="entry name" value="GTP_EFTU_D2"/>
    <property type="match status" value="1"/>
</dbReference>
<dbReference type="Pfam" id="PF03143">
    <property type="entry name" value="GTP_EFTU_D3"/>
    <property type="match status" value="1"/>
</dbReference>
<dbReference type="PRINTS" id="PR00315">
    <property type="entry name" value="ELONGATNFCT"/>
</dbReference>
<dbReference type="SUPFAM" id="SSF50465">
    <property type="entry name" value="EF-Tu/eEF-1alpha/eIF2-gamma C-terminal domain"/>
    <property type="match status" value="1"/>
</dbReference>
<dbReference type="SUPFAM" id="SSF52540">
    <property type="entry name" value="P-loop containing nucleoside triphosphate hydrolases"/>
    <property type="match status" value="1"/>
</dbReference>
<dbReference type="SUPFAM" id="SSF50447">
    <property type="entry name" value="Translation proteins"/>
    <property type="match status" value="1"/>
</dbReference>
<dbReference type="PROSITE" id="PS00301">
    <property type="entry name" value="G_TR_1"/>
    <property type="match status" value="1"/>
</dbReference>
<dbReference type="PROSITE" id="PS51722">
    <property type="entry name" value="G_TR_2"/>
    <property type="match status" value="1"/>
</dbReference>
<name>EFTU_GEOUR</name>
<protein>
    <recommendedName>
        <fullName evidence="2">Elongation factor Tu</fullName>
        <shortName evidence="2">EF-Tu</shortName>
        <ecNumber evidence="2">3.6.5.3</ecNumber>
    </recommendedName>
</protein>
<proteinExistence type="inferred from homology"/>
<gene>
    <name evidence="2" type="primary">tuf1</name>
    <name type="ordered locus">Gura_1053</name>
</gene>
<gene>
    <name evidence="2" type="primary">tuf2</name>
    <name type="ordered locus">Gura_1066</name>
</gene>